<comment type="function">
    <text evidence="2">Exhibits 3'-nucleotidase activity toward adenosine 3',5'-bisphosphate (PAP), namely hydrolyzes adenosine 3',5'-bisphosphate into adenosine 5'-monophosphate (AMP) and a phosphate. May play a role in the formation of skeletal elements derived through endochondral ossification, possibly by clearing adenosine 3',5'-bisphosphate produced by Golgi sulfotransferases during glycosaminoglycan sulfation. Has no activity toward 3'-phosphoadenosine 5'-phosphosulfate (PAPS) or inositol phosphate (IP) substrates including I(1)P, I(1,4)P2, I(1,3,4)P3, I(1,4,5)P3 and I(1,3,4,5)P4.</text>
</comment>
<comment type="catalytic activity">
    <reaction evidence="2">
        <text>adenosine 3',5'-bisphosphate + H2O = AMP + phosphate</text>
        <dbReference type="Rhea" id="RHEA:10040"/>
        <dbReference type="ChEBI" id="CHEBI:15377"/>
        <dbReference type="ChEBI" id="CHEBI:43474"/>
        <dbReference type="ChEBI" id="CHEBI:58343"/>
        <dbReference type="ChEBI" id="CHEBI:456215"/>
        <dbReference type="EC" id="3.1.3.7"/>
    </reaction>
</comment>
<comment type="cofactor">
    <cofactor evidence="1">
        <name>Mg(2+)</name>
        <dbReference type="ChEBI" id="CHEBI:18420"/>
    </cofactor>
</comment>
<comment type="activity regulation">
    <text evidence="2">Strongly inhibited by lithium.</text>
</comment>
<comment type="pathway">
    <text evidence="2">Sulfur metabolism.</text>
</comment>
<comment type="subcellular location">
    <subcellularLocation>
        <location evidence="2 3">Golgi apparatus</location>
    </subcellularLocation>
    <subcellularLocation>
        <location evidence="2 3">Golgi apparatus</location>
        <location evidence="2 3">trans-Golgi network membrane</location>
        <topology evidence="3">Single-pass type II membrane protein</topology>
    </subcellularLocation>
    <text evidence="3">The catalytic core is predicted to reside within the Golgi lumen.</text>
</comment>
<comment type="PTM">
    <text evidence="3">Contains N-linked glycan resistant to endoglycosydase H.</text>
</comment>
<comment type="similarity">
    <text evidence="7">Belongs to the inositol monophosphatase superfamily.</text>
</comment>
<reference key="1">
    <citation type="submission" date="2009-03" db="EMBL/GenBank/DDBJ databases">
        <authorList>
            <person name="Warren W."/>
            <person name="Ye L."/>
            <person name="Minx P."/>
            <person name="Worley K."/>
            <person name="Gibbs R."/>
            <person name="Wilson R.K."/>
        </authorList>
    </citation>
    <scope>NUCLEOTIDE SEQUENCE [LARGE SCALE GENOMIC DNA]</scope>
</reference>
<evidence type="ECO:0000250" key="1"/>
<evidence type="ECO:0000250" key="2">
    <source>
        <dbReference type="UniProtKB" id="Q80V26"/>
    </source>
</evidence>
<evidence type="ECO:0000250" key="3">
    <source>
        <dbReference type="UniProtKB" id="Q9NX62"/>
    </source>
</evidence>
<evidence type="ECO:0000250" key="4">
    <source>
        <dbReference type="UniProtKB" id="Q9Z1N4"/>
    </source>
</evidence>
<evidence type="ECO:0000255" key="5"/>
<evidence type="ECO:0000256" key="6">
    <source>
        <dbReference type="SAM" id="MobiDB-lite"/>
    </source>
</evidence>
<evidence type="ECO:0000305" key="7"/>
<organism>
    <name type="scientific">Callithrix jacchus</name>
    <name type="common">White-tufted-ear marmoset</name>
    <dbReference type="NCBI Taxonomy" id="9483"/>
    <lineage>
        <taxon>Eukaryota</taxon>
        <taxon>Metazoa</taxon>
        <taxon>Chordata</taxon>
        <taxon>Craniata</taxon>
        <taxon>Vertebrata</taxon>
        <taxon>Euteleostomi</taxon>
        <taxon>Mammalia</taxon>
        <taxon>Eutheria</taxon>
        <taxon>Euarchontoglires</taxon>
        <taxon>Primates</taxon>
        <taxon>Haplorrhini</taxon>
        <taxon>Platyrrhini</taxon>
        <taxon>Cebidae</taxon>
        <taxon>Callitrichinae</taxon>
        <taxon>Callithrix</taxon>
        <taxon>Callithrix</taxon>
    </lineage>
</organism>
<gene>
    <name type="primary">BPNT2</name>
    <name type="synonym">IMPA3</name>
    <name type="synonym">IMPAD1</name>
</gene>
<dbReference type="EC" id="3.1.3.7" evidence="2"/>
<dbReference type="EMBL" id="ACFV01107430">
    <property type="status" value="NOT_ANNOTATED_CDS"/>
    <property type="molecule type" value="Genomic_DNA"/>
</dbReference>
<dbReference type="EMBL" id="ACFV01107431">
    <property type="status" value="NOT_ANNOTATED_CDS"/>
    <property type="molecule type" value="Genomic_DNA"/>
</dbReference>
<dbReference type="EMBL" id="ACFV01107432">
    <property type="status" value="NOT_ANNOTATED_CDS"/>
    <property type="molecule type" value="Genomic_DNA"/>
</dbReference>
<dbReference type="EMBL" id="ACFV01107433">
    <property type="status" value="NOT_ANNOTATED_CDS"/>
    <property type="molecule type" value="Genomic_DNA"/>
</dbReference>
<dbReference type="RefSeq" id="XP_002758970.1">
    <property type="nucleotide sequence ID" value="XM_002758924.6"/>
</dbReference>
<dbReference type="SMR" id="F6Y5S8"/>
<dbReference type="FunCoup" id="F6Y5S8">
    <property type="interactions" value="2379"/>
</dbReference>
<dbReference type="STRING" id="9483.ENSCJAP00000030514"/>
<dbReference type="GlyCosmos" id="F6Y5S8">
    <property type="glycosylation" value="1 site, No reported glycans"/>
</dbReference>
<dbReference type="Ensembl" id="ENSCJAT00000032244.5">
    <property type="protein sequence ID" value="ENSCJAP00000030514.2"/>
    <property type="gene ID" value="ENSCJAG00000016573.5"/>
</dbReference>
<dbReference type="GeneID" id="100395037"/>
<dbReference type="KEGG" id="cjc:100395037"/>
<dbReference type="CTD" id="54928"/>
<dbReference type="eggNOG" id="KOG3853">
    <property type="taxonomic scope" value="Eukaryota"/>
</dbReference>
<dbReference type="GeneTree" id="ENSGT00940000160216"/>
<dbReference type="InParanoid" id="F6Y5S8"/>
<dbReference type="OMA" id="VKQVAWQ"/>
<dbReference type="OrthoDB" id="74460at2759"/>
<dbReference type="TreeFam" id="TF314300"/>
<dbReference type="Proteomes" id="UP000008225">
    <property type="component" value="Chromosome 16"/>
</dbReference>
<dbReference type="Bgee" id="ENSCJAG00000016573">
    <property type="expression patterns" value="Expressed in heart and 6 other cell types or tissues"/>
</dbReference>
<dbReference type="GO" id="GO:0005829">
    <property type="term" value="C:cytosol"/>
    <property type="evidence" value="ECO:0007669"/>
    <property type="project" value="Ensembl"/>
</dbReference>
<dbReference type="GO" id="GO:0016604">
    <property type="term" value="C:nuclear body"/>
    <property type="evidence" value="ECO:0007669"/>
    <property type="project" value="Ensembl"/>
</dbReference>
<dbReference type="GO" id="GO:0032588">
    <property type="term" value="C:trans-Golgi network membrane"/>
    <property type="evidence" value="ECO:0000250"/>
    <property type="project" value="UniProtKB"/>
</dbReference>
<dbReference type="GO" id="GO:0008441">
    <property type="term" value="F:3'(2'),5'-bisphosphate nucleotidase activity"/>
    <property type="evidence" value="ECO:0007669"/>
    <property type="project" value="UniProtKB-EC"/>
</dbReference>
<dbReference type="GO" id="GO:0097657">
    <property type="term" value="F:3',5'-nucleotide bisphosphate phosphatase activity"/>
    <property type="evidence" value="ECO:0000250"/>
    <property type="project" value="UniProtKB"/>
</dbReference>
<dbReference type="GO" id="GO:0008254">
    <property type="term" value="F:3'-nucleotidase activity"/>
    <property type="evidence" value="ECO:0007669"/>
    <property type="project" value="Ensembl"/>
</dbReference>
<dbReference type="GO" id="GO:0046872">
    <property type="term" value="F:metal ion binding"/>
    <property type="evidence" value="ECO:0007669"/>
    <property type="project" value="UniProtKB-KW"/>
</dbReference>
<dbReference type="GO" id="GO:0002063">
    <property type="term" value="P:chondrocyte development"/>
    <property type="evidence" value="ECO:0007669"/>
    <property type="project" value="Ensembl"/>
</dbReference>
<dbReference type="GO" id="GO:0042733">
    <property type="term" value="P:embryonic digit morphogenesis"/>
    <property type="evidence" value="ECO:0007669"/>
    <property type="project" value="Ensembl"/>
</dbReference>
<dbReference type="GO" id="GO:0001958">
    <property type="term" value="P:endochondral ossification"/>
    <property type="evidence" value="ECO:0007669"/>
    <property type="project" value="Ensembl"/>
</dbReference>
<dbReference type="GO" id="GO:0046854">
    <property type="term" value="P:phosphatidylinositol phosphate biosynthetic process"/>
    <property type="evidence" value="ECO:0007669"/>
    <property type="project" value="InterPro"/>
</dbReference>
<dbReference type="GO" id="GO:0009791">
    <property type="term" value="P:post-embryonic development"/>
    <property type="evidence" value="ECO:0007669"/>
    <property type="project" value="Ensembl"/>
</dbReference>
<dbReference type="CDD" id="cd01640">
    <property type="entry name" value="IPPase"/>
    <property type="match status" value="1"/>
</dbReference>
<dbReference type="FunFam" id="3.30.540.10:FF:000012">
    <property type="entry name" value="Blast:Putative inositol monophosphatase 3"/>
    <property type="match status" value="1"/>
</dbReference>
<dbReference type="FunFam" id="3.40.190.80:FF:000007">
    <property type="entry name" value="Blast:Putative inositol monophosphatase 3"/>
    <property type="match status" value="1"/>
</dbReference>
<dbReference type="Gene3D" id="3.40.190.80">
    <property type="match status" value="1"/>
</dbReference>
<dbReference type="Gene3D" id="3.30.540.10">
    <property type="entry name" value="Fructose-1,6-Bisphosphatase, subunit A, domain 1"/>
    <property type="match status" value="1"/>
</dbReference>
<dbReference type="InterPro" id="IPR050725">
    <property type="entry name" value="CysQ/Inositol_MonoPase"/>
</dbReference>
<dbReference type="InterPro" id="IPR000760">
    <property type="entry name" value="Inositol_monophosphatase-like"/>
</dbReference>
<dbReference type="InterPro" id="IPR020550">
    <property type="entry name" value="Inositol_monophosphatase_CS"/>
</dbReference>
<dbReference type="PANTHER" id="PTHR43028">
    <property type="entry name" value="3'(2'),5'-BISPHOSPHATE NUCLEOTIDASE 1"/>
    <property type="match status" value="1"/>
</dbReference>
<dbReference type="PANTHER" id="PTHR43028:SF6">
    <property type="entry name" value="GOLGI-RESIDENT ADENOSINE 3',5'-BISPHOSPHATE 3'-PHOSPHATASE"/>
    <property type="match status" value="1"/>
</dbReference>
<dbReference type="Pfam" id="PF00459">
    <property type="entry name" value="Inositol_P"/>
    <property type="match status" value="1"/>
</dbReference>
<dbReference type="SUPFAM" id="SSF56655">
    <property type="entry name" value="Carbohydrate phosphatase"/>
    <property type="match status" value="1"/>
</dbReference>
<dbReference type="PROSITE" id="PS00630">
    <property type="entry name" value="IMP_2"/>
    <property type="match status" value="1"/>
</dbReference>
<sequence length="358" mass="38547">MAPMGIRLSPLGVAVFCLLGLGVLYHLYSGFLAGRFSLFGLGGEPAGGAAGPPAAADGGTVDLREMLAVSVLAAVRGGDEVRRVRESNVLHEKSKGKTREGADDKMTSGDVLSNRKMFYLLKTAFPSVQINTEEHVDAADQEVILWDHKIPEDILKEVTAPKEVPAESVTVWIDPLDATQEYTEDLRKYVTTMVCVAVNGKPVLGVIHKPFSEYTAWAMVDGGSNVKARSSYNEKTPRIVVSRSHSGMVKQVALQTFGNQTTIIPAGGAGYKVLALLDVPDKSQEKADLYIHVTYIKKWDICAGNAILKALGGHMTTLSGEEISYTGSDGIEGGLLASIRMNHQALVRKLPDLEKMGH</sequence>
<proteinExistence type="inferred from homology"/>
<protein>
    <recommendedName>
        <fullName evidence="2">Golgi-resident adenosine 3',5'-bisphosphate 3'-phosphatase</fullName>
        <shortName evidence="2">Golgi-resident PAP phosphatase</shortName>
        <shortName evidence="2">gPAPP</shortName>
        <ecNumber evidence="2">3.1.3.7</ecNumber>
    </recommendedName>
    <alternativeName>
        <fullName>3'(2'), 5'-bisphosphate nucleotidase 2</fullName>
    </alternativeName>
    <alternativeName>
        <fullName evidence="2">Inositol monophosphatase domain-containing protein 1</fullName>
    </alternativeName>
    <alternativeName>
        <fullName evidence="3">Myo-inositol monophosphatase A3</fullName>
    </alternativeName>
    <alternativeName>
        <fullName evidence="2">Phosphoadenosine phosphate 3'-nucleotidase</fullName>
    </alternativeName>
</protein>
<name>IMPA3_CALJA</name>
<keyword id="KW-0007">Acetylation</keyword>
<keyword id="KW-0325">Glycoprotein</keyword>
<keyword id="KW-0333">Golgi apparatus</keyword>
<keyword id="KW-0378">Hydrolase</keyword>
<keyword id="KW-0460">Magnesium</keyword>
<keyword id="KW-0472">Membrane</keyword>
<keyword id="KW-0479">Metal-binding</keyword>
<keyword id="KW-1185">Reference proteome</keyword>
<keyword id="KW-0735">Signal-anchor</keyword>
<keyword id="KW-0812">Transmembrane</keyword>
<keyword id="KW-1133">Transmembrane helix</keyword>
<accession>F6Y5S8</accession>
<feature type="chain" id="PRO_0000413413" description="Golgi-resident adenosine 3',5'-bisphosphate 3'-phosphatase">
    <location>
        <begin position="1"/>
        <end position="358"/>
    </location>
</feature>
<feature type="topological domain" description="Cytoplasmic" evidence="5">
    <location>
        <begin position="1"/>
        <end position="12"/>
    </location>
</feature>
<feature type="transmembrane region" description="Helical" evidence="5">
    <location>
        <begin position="13"/>
        <end position="33"/>
    </location>
</feature>
<feature type="topological domain" description="Lumenal" evidence="5">
    <location>
        <begin position="34"/>
        <end position="358"/>
    </location>
</feature>
<feature type="region of interest" description="Disordered" evidence="6">
    <location>
        <begin position="85"/>
        <end position="106"/>
    </location>
</feature>
<feature type="active site" description="Proton acceptor" evidence="4">
    <location>
        <position position="110"/>
    </location>
</feature>
<feature type="active site" description="Proton acceptor" evidence="4">
    <location>
        <position position="179"/>
    </location>
</feature>
<feature type="binding site" evidence="4">
    <location>
        <position position="133"/>
    </location>
    <ligand>
        <name>Mg(2+)</name>
        <dbReference type="ChEBI" id="CHEBI:18420"/>
        <label>1</label>
    </ligand>
</feature>
<feature type="binding site" evidence="4">
    <location>
        <position position="133"/>
    </location>
    <ligand>
        <name>Mg(2+)</name>
        <dbReference type="ChEBI" id="CHEBI:18420"/>
        <label>3</label>
    </ligand>
</feature>
<feature type="binding site" evidence="4">
    <location>
        <position position="174"/>
    </location>
    <ligand>
        <name>Mg(2+)</name>
        <dbReference type="ChEBI" id="CHEBI:18420"/>
        <label>1</label>
    </ligand>
</feature>
<feature type="binding site" evidence="4">
    <location>
        <position position="174"/>
    </location>
    <ligand>
        <name>Mg(2+)</name>
        <dbReference type="ChEBI" id="CHEBI:18420"/>
        <label>2</label>
    </ligand>
</feature>
<feature type="binding site" evidence="4">
    <location>
        <position position="176"/>
    </location>
    <ligand>
        <name>Mg(2+)</name>
        <dbReference type="ChEBI" id="CHEBI:18420"/>
        <label>1</label>
    </ligand>
</feature>
<feature type="binding site" evidence="4">
    <location>
        <position position="177"/>
    </location>
    <ligand>
        <name>Mg(2+)</name>
        <dbReference type="ChEBI" id="CHEBI:18420"/>
        <label>2</label>
    </ligand>
</feature>
<feature type="binding site" evidence="4">
    <location>
        <position position="242"/>
    </location>
    <ligand>
        <name>AMP</name>
        <dbReference type="ChEBI" id="CHEBI:456215"/>
    </ligand>
</feature>
<feature type="binding site" evidence="4">
    <location>
        <position position="245"/>
    </location>
    <ligand>
        <name>AMP</name>
        <dbReference type="ChEBI" id="CHEBI:456215"/>
    </ligand>
</feature>
<feature type="binding site" evidence="4">
    <location>
        <position position="268"/>
    </location>
    <ligand>
        <name>AMP</name>
        <dbReference type="ChEBI" id="CHEBI:456215"/>
    </ligand>
</feature>
<feature type="binding site" evidence="4">
    <location>
        <position position="272"/>
    </location>
    <ligand>
        <name>AMP</name>
        <dbReference type="ChEBI" id="CHEBI:456215"/>
    </ligand>
</feature>
<feature type="binding site" evidence="4">
    <location>
        <position position="300"/>
    </location>
    <ligand>
        <name>Mg(2+)</name>
        <dbReference type="ChEBI" id="CHEBI:18420"/>
        <label>2</label>
    </ligand>
</feature>
<feature type="modified residue" description="N-acetylmethionine" evidence="3">
    <location>
        <position position="1"/>
    </location>
</feature>
<feature type="glycosylation site" description="N-linked (GlcNAc...) asparagine" evidence="7">
    <location>
        <position position="259"/>
    </location>
</feature>